<gene>
    <name type="primary">ZPLD1</name>
</gene>
<sequence>MEQIWLLLLLTIRVLPGSAQFNGYNCDANLHSRFPAERDISVYCGVQAITMKINFCTVLFSGYSETDLALNGRHGDSHCRGFINNNTFPAVVIFIINLSTLEGCGNNLVVSTIPGVSAYGNATSVQVGNISGYIDTPDPPTIISYLPGLLYKFSCSYPLEYLVNNTQLASSSAAISVRENNGTFVSTLNLLLYNDSTYNQQLIIPSIGLPLKTKVFAAVQATNLDGRWNVLMDYCYTTPSGNPNDDIRYDLFLSCDKDPQTTVIENGRSQRGRFSFEVFRFVKHKNQKMSTVFLHCVTKLCRADDCPFLMPICSHRERRDAGRRTTWSPQSSSGSAVLSAGPIITRSDETPTNNSQLGSPSMPPFQLNAITSALISGMVILGVTSFSLLLCSLALLHRKGPTSLVLNGIRNPVFD</sequence>
<keyword id="KW-0025">Alternative splicing</keyword>
<keyword id="KW-0968">Cytoplasmic vesicle</keyword>
<keyword id="KW-1015">Disulfide bond</keyword>
<keyword id="KW-0272">Extracellular matrix</keyword>
<keyword id="KW-0325">Glycoprotein</keyword>
<keyword id="KW-0472">Membrane</keyword>
<keyword id="KW-1267">Proteomics identification</keyword>
<keyword id="KW-1185">Reference proteome</keyword>
<keyword id="KW-0964">Secreted</keyword>
<keyword id="KW-0732">Signal</keyword>
<keyword id="KW-0812">Transmembrane</keyword>
<keyword id="KW-1133">Transmembrane helix</keyword>
<evidence type="ECO:0000250" key="1">
    <source>
        <dbReference type="UniProtKB" id="C0H9B6"/>
    </source>
</evidence>
<evidence type="ECO:0000250" key="2">
    <source>
        <dbReference type="UniProtKB" id="P10761"/>
    </source>
</evidence>
<evidence type="ECO:0000255" key="3"/>
<evidence type="ECO:0000255" key="4">
    <source>
        <dbReference type="PROSITE-ProRule" id="PRU00375"/>
    </source>
</evidence>
<evidence type="ECO:0000256" key="5">
    <source>
        <dbReference type="SAM" id="MobiDB-lite"/>
    </source>
</evidence>
<evidence type="ECO:0000269" key="6">
    <source>
    </source>
</evidence>
<evidence type="ECO:0000303" key="7">
    <source ref="1"/>
</evidence>
<evidence type="ECO:0000305" key="8"/>
<reference key="1">
    <citation type="submission" date="2002-03" db="EMBL/GenBank/DDBJ databases">
        <authorList>
            <person name="Zhu P.Y."/>
            <person name="Huang Y.F."/>
        </authorList>
    </citation>
    <scope>NUCLEOTIDE SEQUENCE [MRNA] (ISOFORM 2)</scope>
    <source>
        <tissue>Testis</tissue>
    </source>
</reference>
<reference key="2">
    <citation type="submission" date="2005-09" db="EMBL/GenBank/DDBJ databases">
        <authorList>
            <person name="Mural R.J."/>
            <person name="Istrail S."/>
            <person name="Sutton G.G."/>
            <person name="Florea L."/>
            <person name="Halpern A.L."/>
            <person name="Mobarry C.M."/>
            <person name="Lippert R."/>
            <person name="Walenz B."/>
            <person name="Shatkay H."/>
            <person name="Dew I."/>
            <person name="Miller J.R."/>
            <person name="Flanigan M.J."/>
            <person name="Edwards N.J."/>
            <person name="Bolanos R."/>
            <person name="Fasulo D."/>
            <person name="Halldorsson B.V."/>
            <person name="Hannenhalli S."/>
            <person name="Turner R."/>
            <person name="Yooseph S."/>
            <person name="Lu F."/>
            <person name="Nusskern D.R."/>
            <person name="Shue B.C."/>
            <person name="Zheng X.H."/>
            <person name="Zhong F."/>
            <person name="Delcher A.L."/>
            <person name="Huson D.H."/>
            <person name="Kravitz S.A."/>
            <person name="Mouchard L."/>
            <person name="Reinert K."/>
            <person name="Remington K.A."/>
            <person name="Clark A.G."/>
            <person name="Waterman M.S."/>
            <person name="Eichler E.E."/>
            <person name="Adams M.D."/>
            <person name="Hunkapiller M.W."/>
            <person name="Myers E.W."/>
            <person name="Venter J.C."/>
        </authorList>
    </citation>
    <scope>NUCLEOTIDE SEQUENCE [LARGE SCALE GENOMIC DNA]</scope>
</reference>
<reference key="3">
    <citation type="journal article" date="2004" name="Genome Res.">
        <title>The status, quality, and expansion of the NIH full-length cDNA project: the Mammalian Gene Collection (MGC).</title>
        <authorList>
            <consortium name="The MGC Project Team"/>
        </authorList>
    </citation>
    <scope>NUCLEOTIDE SEQUENCE [LARGE SCALE MRNA] (ISOFORM 1)</scope>
    <source>
        <tissue>Eye</tissue>
        <tissue>Testis</tissue>
    </source>
</reference>
<reference key="4">
    <citation type="journal article" date="2008" name="Neuroscience">
        <title>ZPLD1 gene is disrupted in a patient with balanced translocation that exhibits cerebral cavernous malformations.</title>
        <authorList>
            <person name="Gianfrancesco F."/>
            <person name="Esposito T."/>
            <person name="Penco S."/>
            <person name="Maglione V."/>
            <person name="Liquori C.L."/>
            <person name="Patrosso M.C."/>
            <person name="Zuffardi O."/>
            <person name="Ciccodicola A."/>
            <person name="Marchuk D.A."/>
            <person name="Squitieri F."/>
        </authorList>
    </citation>
    <scope>TISSUE SPECIFICITY</scope>
</reference>
<feature type="signal peptide" evidence="3">
    <location>
        <begin position="1"/>
        <end position="19"/>
    </location>
</feature>
<feature type="chain" id="PRO_0000307284" description="Zona pellucida-like domain-containing protein 1">
    <location>
        <begin position="20"/>
        <end position="415"/>
    </location>
</feature>
<feature type="chain" id="PRO_0000441814" description="Zona pellucida-like domain-containing protein 1, secreted form" evidence="8">
    <location>
        <begin position="20"/>
        <end position="319"/>
    </location>
</feature>
<feature type="topological domain" description="Extracellular" evidence="3">
    <location>
        <begin position="20"/>
        <end position="372"/>
    </location>
</feature>
<feature type="transmembrane region" description="Helical" evidence="3">
    <location>
        <begin position="373"/>
        <end position="393"/>
    </location>
</feature>
<feature type="topological domain" description="Cytoplasmic" evidence="3">
    <location>
        <begin position="394"/>
        <end position="415"/>
    </location>
</feature>
<feature type="domain" description="ZP" evidence="4">
    <location>
        <begin position="43"/>
        <end position="320"/>
    </location>
</feature>
<feature type="region of interest" description="Disordered" evidence="5">
    <location>
        <begin position="323"/>
        <end position="360"/>
    </location>
</feature>
<feature type="compositionally biased region" description="Polar residues" evidence="5">
    <location>
        <begin position="325"/>
        <end position="336"/>
    </location>
</feature>
<feature type="compositionally biased region" description="Polar residues" evidence="5">
    <location>
        <begin position="350"/>
        <end position="359"/>
    </location>
</feature>
<feature type="site" description="Cleavage" evidence="2">
    <location>
        <begin position="319"/>
        <end position="320"/>
    </location>
</feature>
<feature type="glycosylation site" description="N-linked (GlcNAc...) asparagine" evidence="3">
    <location>
        <position position="121"/>
    </location>
</feature>
<feature type="glycosylation site" description="N-linked (GlcNAc...) asparagine" evidence="3">
    <location>
        <position position="164"/>
    </location>
</feature>
<feature type="disulfide bond" evidence="2">
    <location>
        <begin position="44"/>
        <end position="155"/>
    </location>
</feature>
<feature type="disulfide bond" evidence="2">
    <location>
        <begin position="79"/>
        <end position="104"/>
    </location>
</feature>
<feature type="disulfide bond" evidence="2">
    <location>
        <begin position="235"/>
        <end position="296"/>
    </location>
</feature>
<feature type="disulfide bond" evidence="2">
    <location>
        <begin position="255"/>
        <end position="313"/>
    </location>
</feature>
<feature type="splice variant" id="VSP_037072" description="In isoform 2." evidence="7">
    <original>M</original>
    <variation>MMLRFSMCRGNDEGFAM</variation>
    <location>
        <position position="1"/>
    </location>
</feature>
<feature type="sequence variant" id="VAR_035400" description="In dbSNP:rs6784362.">
    <original>I</original>
    <variation>F</variation>
    <location>
        <position position="12"/>
    </location>
</feature>
<feature type="sequence variant" id="VAR_035401" description="In dbSNP:rs6784389.">
    <original>N</original>
    <variation>S</variation>
    <location>
        <position position="29"/>
    </location>
</feature>
<feature type="sequence variant" id="VAR_035402" description="In dbSNP:rs12054046.">
    <original>T</original>
    <variation>A</variation>
    <location>
        <position position="197"/>
    </location>
</feature>
<feature type="sequence conflict" description="In Ref. 3; AAH31261." evidence="8" ref="3">
    <original>N</original>
    <variation>S</variation>
    <location>
        <position position="242"/>
    </location>
</feature>
<name>ZPLD1_HUMAN</name>
<organism>
    <name type="scientific">Homo sapiens</name>
    <name type="common">Human</name>
    <dbReference type="NCBI Taxonomy" id="9606"/>
    <lineage>
        <taxon>Eukaryota</taxon>
        <taxon>Metazoa</taxon>
        <taxon>Chordata</taxon>
        <taxon>Craniata</taxon>
        <taxon>Vertebrata</taxon>
        <taxon>Euteleostomi</taxon>
        <taxon>Mammalia</taxon>
        <taxon>Eutheria</taxon>
        <taxon>Euarchontoglires</taxon>
        <taxon>Primates</taxon>
        <taxon>Haplorrhini</taxon>
        <taxon>Catarrhini</taxon>
        <taxon>Hominidae</taxon>
        <taxon>Homo</taxon>
    </lineage>
</organism>
<dbReference type="EMBL" id="AY090780">
    <property type="protein sequence ID" value="AAM09816.1"/>
    <property type="molecule type" value="mRNA"/>
</dbReference>
<dbReference type="EMBL" id="CH471052">
    <property type="protein sequence ID" value="EAW79766.1"/>
    <property type="status" value="ALT_SEQ"/>
    <property type="molecule type" value="Genomic_DNA"/>
</dbReference>
<dbReference type="EMBL" id="BC021279">
    <property type="protein sequence ID" value="AAH21279.2"/>
    <property type="molecule type" value="mRNA"/>
</dbReference>
<dbReference type="EMBL" id="BC031261">
    <property type="protein sequence ID" value="AAH31261.1"/>
    <property type="molecule type" value="mRNA"/>
</dbReference>
<dbReference type="CCDS" id="CCDS2947.1">
    <molecule id="Q8TCW7-2"/>
</dbReference>
<dbReference type="CCDS" id="CCDS87115.1">
    <molecule id="Q8TCW7-1"/>
</dbReference>
<dbReference type="RefSeq" id="NP_001316717.1">
    <molecule id="Q8TCW7-1"/>
    <property type="nucleotide sequence ID" value="NM_001329788.2"/>
</dbReference>
<dbReference type="RefSeq" id="NP_778226.1">
    <molecule id="Q8TCW7-2"/>
    <property type="nucleotide sequence ID" value="NM_175056.2"/>
</dbReference>
<dbReference type="RefSeq" id="XP_016861192.1">
    <molecule id="Q8TCW7-1"/>
    <property type="nucleotide sequence ID" value="XM_017005703.1"/>
</dbReference>
<dbReference type="RefSeq" id="XP_016861193.1">
    <molecule id="Q8TCW7-1"/>
    <property type="nucleotide sequence ID" value="XM_017005704.1"/>
</dbReference>
<dbReference type="RefSeq" id="XP_054201186.1">
    <molecule id="Q8TCW7-1"/>
    <property type="nucleotide sequence ID" value="XM_054345211.1"/>
</dbReference>
<dbReference type="RefSeq" id="XP_054201187.1">
    <molecule id="Q8TCW7-1"/>
    <property type="nucleotide sequence ID" value="XM_054345212.1"/>
</dbReference>
<dbReference type="SMR" id="Q8TCW7"/>
<dbReference type="BioGRID" id="126276">
    <property type="interactions" value="21"/>
</dbReference>
<dbReference type="FunCoup" id="Q8TCW7">
    <property type="interactions" value="91"/>
</dbReference>
<dbReference type="IntAct" id="Q8TCW7">
    <property type="interactions" value="11"/>
</dbReference>
<dbReference type="STRING" id="9606.ENSP00000307801"/>
<dbReference type="GlyCosmos" id="Q8TCW7">
    <property type="glycosylation" value="2 sites, No reported glycans"/>
</dbReference>
<dbReference type="GlyGen" id="Q8TCW7">
    <property type="glycosylation" value="2 sites"/>
</dbReference>
<dbReference type="PhosphoSitePlus" id="Q8TCW7"/>
<dbReference type="BioMuta" id="ZPLD1"/>
<dbReference type="DMDM" id="160221311"/>
<dbReference type="MassIVE" id="Q8TCW7"/>
<dbReference type="PaxDb" id="9606-ENSP00000307801"/>
<dbReference type="PeptideAtlas" id="Q8TCW7"/>
<dbReference type="ProteomicsDB" id="74180">
    <molecule id="Q8TCW7-1"/>
</dbReference>
<dbReference type="ProteomicsDB" id="74181">
    <molecule id="Q8TCW7-2"/>
</dbReference>
<dbReference type="Antibodypedia" id="32313">
    <property type="antibodies" value="91 antibodies from 18 providers"/>
</dbReference>
<dbReference type="DNASU" id="131368"/>
<dbReference type="Ensembl" id="ENST00000306176.5">
    <molecule id="Q8TCW7-2"/>
    <property type="protein sequence ID" value="ENSP00000307801.1"/>
    <property type="gene ID" value="ENSG00000170044.9"/>
</dbReference>
<dbReference type="Ensembl" id="ENST00000466937.2">
    <molecule id="Q8TCW7-1"/>
    <property type="protein sequence ID" value="ENSP00000418253.1"/>
    <property type="gene ID" value="ENSG00000170044.9"/>
</dbReference>
<dbReference type="Ensembl" id="ENST00000491959.5">
    <molecule id="Q8TCW7-1"/>
    <property type="protein sequence ID" value="ENSP00000420265.1"/>
    <property type="gene ID" value="ENSG00000170044.9"/>
</dbReference>
<dbReference type="GeneID" id="131368"/>
<dbReference type="KEGG" id="hsa:131368"/>
<dbReference type="MANE-Select" id="ENST00000466937.2">
    <property type="protein sequence ID" value="ENSP00000418253.1"/>
    <property type="RefSeq nucleotide sequence ID" value="NM_001329788.2"/>
    <property type="RefSeq protein sequence ID" value="NP_001316717.1"/>
</dbReference>
<dbReference type="UCSC" id="uc003dvs.2">
    <molecule id="Q8TCW7-1"/>
    <property type="organism name" value="human"/>
</dbReference>
<dbReference type="AGR" id="HGNC:27022"/>
<dbReference type="CTD" id="131368"/>
<dbReference type="DisGeNET" id="131368"/>
<dbReference type="GeneCards" id="ZPLD1"/>
<dbReference type="HGNC" id="HGNC:27022">
    <property type="gene designation" value="ZPLD1"/>
</dbReference>
<dbReference type="HPA" id="ENSG00000170044">
    <property type="expression patterns" value="Tissue enhanced (gallbladder, retina)"/>
</dbReference>
<dbReference type="MIM" id="615915">
    <property type="type" value="gene"/>
</dbReference>
<dbReference type="neXtProt" id="NX_Q8TCW7"/>
<dbReference type="OpenTargets" id="ENSG00000170044"/>
<dbReference type="PharmGKB" id="PA142670472"/>
<dbReference type="VEuPathDB" id="HostDB:ENSG00000170044"/>
<dbReference type="eggNOG" id="ENOG502QQQ1">
    <property type="taxonomic scope" value="Eukaryota"/>
</dbReference>
<dbReference type="GeneTree" id="ENSGT00940000156527"/>
<dbReference type="HOGENOM" id="CLU_045259_2_0_1"/>
<dbReference type="InParanoid" id="Q8TCW7"/>
<dbReference type="OrthoDB" id="9274484at2759"/>
<dbReference type="PAN-GO" id="Q8TCW7">
    <property type="GO annotations" value="3 GO annotations based on evolutionary models"/>
</dbReference>
<dbReference type="PhylomeDB" id="Q8TCW7"/>
<dbReference type="TreeFam" id="TF329882"/>
<dbReference type="PathwayCommons" id="Q8TCW7"/>
<dbReference type="SignaLink" id="Q8TCW7"/>
<dbReference type="BioGRID-ORCS" id="131368">
    <property type="hits" value="11 hits in 1143 CRISPR screens"/>
</dbReference>
<dbReference type="ChiTaRS" id="ZPLD1">
    <property type="organism name" value="human"/>
</dbReference>
<dbReference type="GenomeRNAi" id="131368"/>
<dbReference type="Pharos" id="Q8TCW7">
    <property type="development level" value="Tbio"/>
</dbReference>
<dbReference type="PRO" id="PR:Q8TCW7"/>
<dbReference type="Proteomes" id="UP000005640">
    <property type="component" value="Chromosome 3"/>
</dbReference>
<dbReference type="RNAct" id="Q8TCW7">
    <property type="molecule type" value="protein"/>
</dbReference>
<dbReference type="Bgee" id="ENSG00000170044">
    <property type="expression patterns" value="Expressed in secondary oocyte and 55 other cell types or tissues"/>
</dbReference>
<dbReference type="GO" id="GO:0009986">
    <property type="term" value="C:cell surface"/>
    <property type="evidence" value="ECO:0000318"/>
    <property type="project" value="GO_Central"/>
</dbReference>
<dbReference type="GO" id="GO:0030659">
    <property type="term" value="C:cytoplasmic vesicle membrane"/>
    <property type="evidence" value="ECO:0007669"/>
    <property type="project" value="UniProtKB-SubCell"/>
</dbReference>
<dbReference type="GO" id="GO:0005615">
    <property type="term" value="C:extracellular space"/>
    <property type="evidence" value="ECO:0000318"/>
    <property type="project" value="GO_Central"/>
</dbReference>
<dbReference type="GO" id="GO:0060005">
    <property type="term" value="P:vestibular reflex"/>
    <property type="evidence" value="ECO:0007669"/>
    <property type="project" value="Ensembl"/>
</dbReference>
<dbReference type="Gene3D" id="2.60.40.4100">
    <property type="entry name" value="Zona pellucida, ZP-C domain"/>
    <property type="match status" value="1"/>
</dbReference>
<dbReference type="InterPro" id="IPR055355">
    <property type="entry name" value="ZP-C"/>
</dbReference>
<dbReference type="InterPro" id="IPR042235">
    <property type="entry name" value="ZP-C_dom"/>
</dbReference>
<dbReference type="InterPro" id="IPR055356">
    <property type="entry name" value="ZP-N"/>
</dbReference>
<dbReference type="InterPro" id="IPR001507">
    <property type="entry name" value="ZP_dom"/>
</dbReference>
<dbReference type="PANTHER" id="PTHR14002">
    <property type="entry name" value="ENDOGLIN/TGF-BETA RECEPTOR TYPE III"/>
    <property type="match status" value="1"/>
</dbReference>
<dbReference type="PANTHER" id="PTHR14002:SF24">
    <property type="entry name" value="ZONA PELLUCIDA-LIKE DOMAIN-CONTAINING PROTEIN 1"/>
    <property type="match status" value="1"/>
</dbReference>
<dbReference type="Pfam" id="PF00100">
    <property type="entry name" value="Zona_pellucida"/>
    <property type="match status" value="1"/>
</dbReference>
<dbReference type="Pfam" id="PF23344">
    <property type="entry name" value="ZP-N"/>
    <property type="match status" value="1"/>
</dbReference>
<dbReference type="SMART" id="SM00241">
    <property type="entry name" value="ZP"/>
    <property type="match status" value="1"/>
</dbReference>
<dbReference type="PROSITE" id="PS51034">
    <property type="entry name" value="ZP_2"/>
    <property type="match status" value="1"/>
</dbReference>
<proteinExistence type="evidence at protein level"/>
<comment type="function">
    <text evidence="1">Glycoprotein which is a component of the gelatinous extracellular matrix in the cupulae of the vestibular organ.</text>
</comment>
<comment type="subcellular location">
    <molecule>Zona pellucida-like domain-containing protein 1</molecule>
    <subcellularLocation>
        <location evidence="1">Cytoplasmic vesicle membrane</location>
        <topology evidence="3">Single-pass type I membrane protein</topology>
    </subcellularLocation>
</comment>
<comment type="subcellular location">
    <molecule>Zona pellucida-like domain-containing protein 1, secreted form</molecule>
    <subcellularLocation>
        <location evidence="1">Secreted</location>
        <location evidence="1">Extracellular space</location>
        <location evidence="1">Extracellular matrix</location>
    </subcellularLocation>
</comment>
<comment type="alternative products">
    <event type="alternative splicing"/>
    <isoform>
        <id>Q8TCW7-1</id>
        <name>1</name>
        <sequence type="displayed"/>
    </isoform>
    <isoform>
        <id>Q8TCW7-2</id>
        <name>2</name>
        <sequence type="described" ref="VSP_037072"/>
    </isoform>
</comment>
<comment type="tissue specificity">
    <text evidence="6">Detected in placenta, kidney, lung, pancreas and at very low level in other tissues.</text>
</comment>
<comment type="PTM">
    <text evidence="1">Proteolytically cleaved before the transmembrane segment to yield the secreted form found in the extracellular matrix of the cupula.</text>
</comment>
<comment type="sequence caution" evidence="8">
    <conflict type="erroneous gene model prediction">
        <sequence resource="EMBL-CDS" id="EAW79766"/>
    </conflict>
</comment>
<accession>Q8TCW7</accession>
<accession>Q49AS1</accession>
<accession>Q8WU36</accession>
<protein>
    <recommendedName>
        <fullName>Zona pellucida-like domain-containing protein 1</fullName>
        <shortName>ZP domain-containing protein 1</shortName>
    </recommendedName>
    <alternativeName>
        <fullName evidence="1">Cupulin</fullName>
    </alternativeName>
    <component>
        <recommendedName>
            <fullName evidence="1">Zona pellucida-like domain-containing protein 1, secreted form</fullName>
        </recommendedName>
    </component>
</protein>